<dbReference type="EC" id="3.6.1.66" evidence="1"/>
<dbReference type="EMBL" id="CP000896">
    <property type="protein sequence ID" value="ABX81482.1"/>
    <property type="molecule type" value="Genomic_DNA"/>
</dbReference>
<dbReference type="RefSeq" id="WP_012242813.1">
    <property type="nucleotide sequence ID" value="NC_010163.1"/>
</dbReference>
<dbReference type="SMR" id="A9NGK2"/>
<dbReference type="STRING" id="441768.ACL_0869"/>
<dbReference type="GeneID" id="41339022"/>
<dbReference type="KEGG" id="acl:ACL_0869"/>
<dbReference type="eggNOG" id="COG0127">
    <property type="taxonomic scope" value="Bacteria"/>
</dbReference>
<dbReference type="HOGENOM" id="CLU_082080_0_0_14"/>
<dbReference type="OrthoDB" id="9807456at2"/>
<dbReference type="Proteomes" id="UP000008558">
    <property type="component" value="Chromosome"/>
</dbReference>
<dbReference type="GO" id="GO:0005829">
    <property type="term" value="C:cytosol"/>
    <property type="evidence" value="ECO:0007669"/>
    <property type="project" value="TreeGrafter"/>
</dbReference>
<dbReference type="GO" id="GO:0035870">
    <property type="term" value="F:dITP diphosphatase activity"/>
    <property type="evidence" value="ECO:0007669"/>
    <property type="project" value="RHEA"/>
</dbReference>
<dbReference type="GO" id="GO:0036220">
    <property type="term" value="F:ITP diphosphatase activity"/>
    <property type="evidence" value="ECO:0007669"/>
    <property type="project" value="UniProtKB-EC"/>
</dbReference>
<dbReference type="GO" id="GO:0046872">
    <property type="term" value="F:metal ion binding"/>
    <property type="evidence" value="ECO:0007669"/>
    <property type="project" value="UniProtKB-KW"/>
</dbReference>
<dbReference type="GO" id="GO:0000166">
    <property type="term" value="F:nucleotide binding"/>
    <property type="evidence" value="ECO:0007669"/>
    <property type="project" value="UniProtKB-KW"/>
</dbReference>
<dbReference type="GO" id="GO:0017111">
    <property type="term" value="F:ribonucleoside triphosphate phosphatase activity"/>
    <property type="evidence" value="ECO:0007669"/>
    <property type="project" value="InterPro"/>
</dbReference>
<dbReference type="GO" id="GO:0036222">
    <property type="term" value="F:XTP diphosphatase activity"/>
    <property type="evidence" value="ECO:0007669"/>
    <property type="project" value="RHEA"/>
</dbReference>
<dbReference type="GO" id="GO:0009117">
    <property type="term" value="P:nucleotide metabolic process"/>
    <property type="evidence" value="ECO:0007669"/>
    <property type="project" value="UniProtKB-KW"/>
</dbReference>
<dbReference type="GO" id="GO:0009146">
    <property type="term" value="P:purine nucleoside triphosphate catabolic process"/>
    <property type="evidence" value="ECO:0007669"/>
    <property type="project" value="UniProtKB-UniRule"/>
</dbReference>
<dbReference type="CDD" id="cd00515">
    <property type="entry name" value="HAM1"/>
    <property type="match status" value="1"/>
</dbReference>
<dbReference type="FunFam" id="3.90.950.10:FF:000001">
    <property type="entry name" value="dITP/XTP pyrophosphatase"/>
    <property type="match status" value="1"/>
</dbReference>
<dbReference type="Gene3D" id="3.90.950.10">
    <property type="match status" value="1"/>
</dbReference>
<dbReference type="HAMAP" id="MF_01405">
    <property type="entry name" value="Non_canon_purine_NTPase"/>
    <property type="match status" value="1"/>
</dbReference>
<dbReference type="InterPro" id="IPR020922">
    <property type="entry name" value="dITP/XTP_pyrophosphatase"/>
</dbReference>
<dbReference type="InterPro" id="IPR029001">
    <property type="entry name" value="ITPase-like_fam"/>
</dbReference>
<dbReference type="InterPro" id="IPR002637">
    <property type="entry name" value="RdgB/HAM1"/>
</dbReference>
<dbReference type="NCBIfam" id="TIGR00042">
    <property type="entry name" value="RdgB/HAM1 family non-canonical purine NTP pyrophosphatase"/>
    <property type="match status" value="1"/>
</dbReference>
<dbReference type="PANTHER" id="PTHR11067:SF9">
    <property type="entry name" value="INOSINE TRIPHOSPHATE PYROPHOSPHATASE"/>
    <property type="match status" value="1"/>
</dbReference>
<dbReference type="PANTHER" id="PTHR11067">
    <property type="entry name" value="INOSINE TRIPHOSPHATE PYROPHOSPHATASE/HAM1 PROTEIN"/>
    <property type="match status" value="1"/>
</dbReference>
<dbReference type="Pfam" id="PF01725">
    <property type="entry name" value="Ham1p_like"/>
    <property type="match status" value="1"/>
</dbReference>
<dbReference type="SUPFAM" id="SSF52972">
    <property type="entry name" value="ITPase-like"/>
    <property type="match status" value="1"/>
</dbReference>
<evidence type="ECO:0000255" key="1">
    <source>
        <dbReference type="HAMAP-Rule" id="MF_01405"/>
    </source>
</evidence>
<comment type="function">
    <text evidence="1">Pyrophosphatase that catalyzes the hydrolysis of nucleoside triphosphates to their monophosphate derivatives, with a high preference for the non-canonical purine nucleotides XTP (xanthosine triphosphate), dITP (deoxyinosine triphosphate) and ITP. Seems to function as a house-cleaning enzyme that removes non-canonical purine nucleotides from the nucleotide pool, thus preventing their incorporation into DNA/RNA and avoiding chromosomal lesions.</text>
</comment>
<comment type="catalytic activity">
    <reaction evidence="1">
        <text>XTP + H2O = XMP + diphosphate + H(+)</text>
        <dbReference type="Rhea" id="RHEA:28610"/>
        <dbReference type="ChEBI" id="CHEBI:15377"/>
        <dbReference type="ChEBI" id="CHEBI:15378"/>
        <dbReference type="ChEBI" id="CHEBI:33019"/>
        <dbReference type="ChEBI" id="CHEBI:57464"/>
        <dbReference type="ChEBI" id="CHEBI:61314"/>
        <dbReference type="EC" id="3.6.1.66"/>
    </reaction>
</comment>
<comment type="catalytic activity">
    <reaction evidence="1">
        <text>dITP + H2O = dIMP + diphosphate + H(+)</text>
        <dbReference type="Rhea" id="RHEA:28342"/>
        <dbReference type="ChEBI" id="CHEBI:15377"/>
        <dbReference type="ChEBI" id="CHEBI:15378"/>
        <dbReference type="ChEBI" id="CHEBI:33019"/>
        <dbReference type="ChEBI" id="CHEBI:61194"/>
        <dbReference type="ChEBI" id="CHEBI:61382"/>
        <dbReference type="EC" id="3.6.1.66"/>
    </reaction>
</comment>
<comment type="catalytic activity">
    <reaction evidence="1">
        <text>ITP + H2O = IMP + diphosphate + H(+)</text>
        <dbReference type="Rhea" id="RHEA:29399"/>
        <dbReference type="ChEBI" id="CHEBI:15377"/>
        <dbReference type="ChEBI" id="CHEBI:15378"/>
        <dbReference type="ChEBI" id="CHEBI:33019"/>
        <dbReference type="ChEBI" id="CHEBI:58053"/>
        <dbReference type="ChEBI" id="CHEBI:61402"/>
        <dbReference type="EC" id="3.6.1.66"/>
    </reaction>
</comment>
<comment type="cofactor">
    <cofactor evidence="1">
        <name>Mg(2+)</name>
        <dbReference type="ChEBI" id="CHEBI:18420"/>
    </cofactor>
    <text evidence="1">Binds 1 Mg(2+) ion per subunit.</text>
</comment>
<comment type="subunit">
    <text evidence="1">Homodimer.</text>
</comment>
<comment type="similarity">
    <text evidence="1">Belongs to the HAM1 NTPase family.</text>
</comment>
<gene>
    <name type="ordered locus">ACL_0869</name>
</gene>
<keyword id="KW-0378">Hydrolase</keyword>
<keyword id="KW-0460">Magnesium</keyword>
<keyword id="KW-0479">Metal-binding</keyword>
<keyword id="KW-0546">Nucleotide metabolism</keyword>
<keyword id="KW-0547">Nucleotide-binding</keyword>
<keyword id="KW-1185">Reference proteome</keyword>
<feature type="chain" id="PRO_1000087375" description="dITP/XTP pyrophosphatase">
    <location>
        <begin position="1"/>
        <end position="200"/>
    </location>
</feature>
<feature type="active site" description="Proton acceptor" evidence="1">
    <location>
        <position position="68"/>
    </location>
</feature>
<feature type="binding site" evidence="1">
    <location>
        <begin position="7"/>
        <end position="12"/>
    </location>
    <ligand>
        <name>substrate</name>
    </ligand>
</feature>
<feature type="binding site" evidence="1">
    <location>
        <position position="68"/>
    </location>
    <ligand>
        <name>Mg(2+)</name>
        <dbReference type="ChEBI" id="CHEBI:18420"/>
    </ligand>
</feature>
<feature type="binding site" evidence="1">
    <location>
        <position position="69"/>
    </location>
    <ligand>
        <name>substrate</name>
    </ligand>
</feature>
<feature type="binding site" evidence="1">
    <location>
        <begin position="147"/>
        <end position="150"/>
    </location>
    <ligand>
        <name>substrate</name>
    </ligand>
</feature>
<feature type="binding site" evidence="1">
    <location>
        <position position="170"/>
    </location>
    <ligand>
        <name>substrate</name>
    </ligand>
</feature>
<feature type="binding site" evidence="1">
    <location>
        <begin position="175"/>
        <end position="176"/>
    </location>
    <ligand>
        <name>substrate</name>
    </ligand>
</feature>
<organism>
    <name type="scientific">Acholeplasma laidlawii (strain PG-8A)</name>
    <dbReference type="NCBI Taxonomy" id="441768"/>
    <lineage>
        <taxon>Bacteria</taxon>
        <taxon>Bacillati</taxon>
        <taxon>Mycoplasmatota</taxon>
        <taxon>Mollicutes</taxon>
        <taxon>Acholeplasmatales</taxon>
        <taxon>Acholeplasmataceae</taxon>
        <taxon>Acholeplasma</taxon>
    </lineage>
</organism>
<name>IXTPA_ACHLI</name>
<sequence length="200" mass="22736">MDIIFASNNYHKFIEMESILKPHQITLLKDFQIDEKEIIESGLTFEANAQIKARAFAKRFNQVAIADDSGIIIEAISPLPGIYSKRYSGLGDTVNNIKVLDVLKNKENRQARFVCAIAIAFPDGKIFTYVGNMLGNIALNLKGSMGFGYDPIFIPDGKQETLGELGSTYKDEHSHRRHALNNFLEAKDEIIDYWRYTWKK</sequence>
<proteinExistence type="inferred from homology"/>
<reference key="1">
    <citation type="journal article" date="2011" name="J. Bacteriol.">
        <title>Complete genome and proteome of Acholeplasma laidlawii.</title>
        <authorList>
            <person name="Lazarev V.N."/>
            <person name="Levitskii S.A."/>
            <person name="Basovskii Y.I."/>
            <person name="Chukin M.M."/>
            <person name="Akopian T.A."/>
            <person name="Vereshchagin V.V."/>
            <person name="Kostrjukova E.S."/>
            <person name="Kovaleva G.Y."/>
            <person name="Kazanov M.D."/>
            <person name="Malko D.B."/>
            <person name="Vitreschak A.G."/>
            <person name="Sernova N.V."/>
            <person name="Gelfand M.S."/>
            <person name="Demina I.A."/>
            <person name="Serebryakova M.V."/>
            <person name="Galyamina M.A."/>
            <person name="Vtyurin N.N."/>
            <person name="Rogov S.I."/>
            <person name="Alexeev D.G."/>
            <person name="Ladygina V.G."/>
            <person name="Govorun V.M."/>
        </authorList>
    </citation>
    <scope>NUCLEOTIDE SEQUENCE [LARGE SCALE GENOMIC DNA]</scope>
    <source>
        <strain>PG-8A</strain>
    </source>
</reference>
<protein>
    <recommendedName>
        <fullName evidence="1">dITP/XTP pyrophosphatase</fullName>
        <ecNumber evidence="1">3.6.1.66</ecNumber>
    </recommendedName>
    <alternativeName>
        <fullName evidence="1">Non-canonical purine NTP pyrophosphatase</fullName>
    </alternativeName>
    <alternativeName>
        <fullName evidence="1">Non-standard purine NTP pyrophosphatase</fullName>
    </alternativeName>
    <alternativeName>
        <fullName evidence="1">Nucleoside-triphosphate diphosphatase</fullName>
    </alternativeName>
    <alternativeName>
        <fullName evidence="1">Nucleoside-triphosphate pyrophosphatase</fullName>
        <shortName evidence="1">NTPase</shortName>
    </alternativeName>
</protein>
<accession>A9NGK2</accession>